<gene>
    <name evidence="1" type="primary">uppP</name>
    <name type="synonym">bacA</name>
    <name type="synonym">upk</name>
    <name type="ordered locus">TDE_0172</name>
</gene>
<comment type="function">
    <text evidence="1">Catalyzes the dephosphorylation of undecaprenyl diphosphate (UPP). Confers resistance to bacitracin.</text>
</comment>
<comment type="catalytic activity">
    <reaction evidence="1">
        <text>di-trans,octa-cis-undecaprenyl diphosphate + H2O = di-trans,octa-cis-undecaprenyl phosphate + phosphate + H(+)</text>
        <dbReference type="Rhea" id="RHEA:28094"/>
        <dbReference type="ChEBI" id="CHEBI:15377"/>
        <dbReference type="ChEBI" id="CHEBI:15378"/>
        <dbReference type="ChEBI" id="CHEBI:43474"/>
        <dbReference type="ChEBI" id="CHEBI:58405"/>
        <dbReference type="ChEBI" id="CHEBI:60392"/>
        <dbReference type="EC" id="3.6.1.27"/>
    </reaction>
</comment>
<comment type="subcellular location">
    <subcellularLocation>
        <location evidence="1">Cell inner membrane</location>
        <topology evidence="1">Multi-pass membrane protein</topology>
    </subcellularLocation>
</comment>
<comment type="miscellaneous">
    <text>Bacitracin is thought to be involved in the inhibition of peptidoglycan synthesis by sequestering undecaprenyl diphosphate, thereby reducing the pool of lipid carrier available.</text>
</comment>
<comment type="similarity">
    <text evidence="1">Belongs to the UppP family.</text>
</comment>
<accession>P60941</accession>
<reference key="1">
    <citation type="journal article" date="2004" name="Proc. Natl. Acad. Sci. U.S.A.">
        <title>Comparison of the genome of the oral pathogen Treponema denticola with other spirochete genomes.</title>
        <authorList>
            <person name="Seshadri R."/>
            <person name="Myers G.S.A."/>
            <person name="Tettelin H."/>
            <person name="Eisen J.A."/>
            <person name="Heidelberg J.F."/>
            <person name="Dodson R.J."/>
            <person name="Davidsen T.M."/>
            <person name="DeBoy R.T."/>
            <person name="Fouts D.E."/>
            <person name="Haft D.H."/>
            <person name="Selengut J."/>
            <person name="Ren Q."/>
            <person name="Brinkac L.M."/>
            <person name="Madupu R."/>
            <person name="Kolonay J.F."/>
            <person name="Durkin S.A."/>
            <person name="Daugherty S.C."/>
            <person name="Shetty J."/>
            <person name="Shvartsbeyn A."/>
            <person name="Gebregeorgis E."/>
            <person name="Geer K."/>
            <person name="Tsegaye G."/>
            <person name="Malek J.A."/>
            <person name="Ayodeji B."/>
            <person name="Shatsman S."/>
            <person name="McLeod M.P."/>
            <person name="Smajs D."/>
            <person name="Howell J.K."/>
            <person name="Pal S."/>
            <person name="Amin A."/>
            <person name="Vashisth P."/>
            <person name="McNeill T.Z."/>
            <person name="Xiang Q."/>
            <person name="Sodergren E."/>
            <person name="Baca E."/>
            <person name="Weinstock G.M."/>
            <person name="Norris S.J."/>
            <person name="Fraser C.M."/>
            <person name="Paulsen I.T."/>
        </authorList>
    </citation>
    <scope>NUCLEOTIDE SEQUENCE [LARGE SCALE GENOMIC DNA]</scope>
    <source>
        <strain>ATCC 35405 / DSM 14222 / CIP 103919 / JCM 8153 / KCTC 15104</strain>
    </source>
</reference>
<sequence>MSIFQAIILGAVQGLAEFLPISSSGHLAIVEYFFKQEDLPILFDILLHVATLAAVCTVFAKRIAGLFSVLGRFIIRKSKPEDKDDLMMIAAIIVATAVTGVIGLLLKDWVKTIDIRLIPIFFIITGLLLIASSKIKHNKQAKNVTLLTAAITGLAQGIGVIPGISRSGSTISASLFAGLDREKAGEFSFLLSIPAILAAFILEIKSADNLLAGVSPISLISGMISAFVVGYFSLRFLLKLIKNGKLMYFAFYLIPLGLGLSIYFWGFAG</sequence>
<name>UPPP_TREDE</name>
<dbReference type="EC" id="3.6.1.27" evidence="1"/>
<dbReference type="EMBL" id="AE017226">
    <property type="protein sequence ID" value="AAS10669.1"/>
    <property type="molecule type" value="Genomic_DNA"/>
</dbReference>
<dbReference type="RefSeq" id="NP_970788.1">
    <property type="nucleotide sequence ID" value="NC_002967.9"/>
</dbReference>
<dbReference type="RefSeq" id="WP_002681055.1">
    <property type="nucleotide sequence ID" value="NC_002967.9"/>
</dbReference>
<dbReference type="SMR" id="P60941"/>
<dbReference type="STRING" id="243275.TDE_0172"/>
<dbReference type="PaxDb" id="243275-TDE_0172"/>
<dbReference type="GeneID" id="2739524"/>
<dbReference type="KEGG" id="tde:TDE_0172"/>
<dbReference type="PATRIC" id="fig|243275.7.peg.169"/>
<dbReference type="eggNOG" id="COG1968">
    <property type="taxonomic scope" value="Bacteria"/>
</dbReference>
<dbReference type="HOGENOM" id="CLU_060296_1_2_12"/>
<dbReference type="OrthoDB" id="9808289at2"/>
<dbReference type="Proteomes" id="UP000008212">
    <property type="component" value="Chromosome"/>
</dbReference>
<dbReference type="GO" id="GO:0005886">
    <property type="term" value="C:plasma membrane"/>
    <property type="evidence" value="ECO:0007669"/>
    <property type="project" value="UniProtKB-SubCell"/>
</dbReference>
<dbReference type="GO" id="GO:0050380">
    <property type="term" value="F:undecaprenyl-diphosphatase activity"/>
    <property type="evidence" value="ECO:0007669"/>
    <property type="project" value="UniProtKB-UniRule"/>
</dbReference>
<dbReference type="GO" id="GO:0071555">
    <property type="term" value="P:cell wall organization"/>
    <property type="evidence" value="ECO:0007669"/>
    <property type="project" value="UniProtKB-KW"/>
</dbReference>
<dbReference type="GO" id="GO:0009252">
    <property type="term" value="P:peptidoglycan biosynthetic process"/>
    <property type="evidence" value="ECO:0007669"/>
    <property type="project" value="UniProtKB-KW"/>
</dbReference>
<dbReference type="GO" id="GO:0008360">
    <property type="term" value="P:regulation of cell shape"/>
    <property type="evidence" value="ECO:0007669"/>
    <property type="project" value="UniProtKB-KW"/>
</dbReference>
<dbReference type="GO" id="GO:0046677">
    <property type="term" value="P:response to antibiotic"/>
    <property type="evidence" value="ECO:0007669"/>
    <property type="project" value="UniProtKB-UniRule"/>
</dbReference>
<dbReference type="HAMAP" id="MF_01006">
    <property type="entry name" value="Undec_diphosphatase"/>
    <property type="match status" value="1"/>
</dbReference>
<dbReference type="InterPro" id="IPR003824">
    <property type="entry name" value="UppP"/>
</dbReference>
<dbReference type="NCBIfam" id="TIGR00753">
    <property type="entry name" value="undec_PP_bacA"/>
    <property type="match status" value="1"/>
</dbReference>
<dbReference type="PANTHER" id="PTHR30622">
    <property type="entry name" value="UNDECAPRENYL-DIPHOSPHATASE"/>
    <property type="match status" value="1"/>
</dbReference>
<dbReference type="PANTHER" id="PTHR30622:SF2">
    <property type="entry name" value="UNDECAPRENYL-DIPHOSPHATASE"/>
    <property type="match status" value="1"/>
</dbReference>
<dbReference type="Pfam" id="PF02673">
    <property type="entry name" value="BacA"/>
    <property type="match status" value="1"/>
</dbReference>
<keyword id="KW-0046">Antibiotic resistance</keyword>
<keyword id="KW-0997">Cell inner membrane</keyword>
<keyword id="KW-1003">Cell membrane</keyword>
<keyword id="KW-0133">Cell shape</keyword>
<keyword id="KW-0961">Cell wall biogenesis/degradation</keyword>
<keyword id="KW-0378">Hydrolase</keyword>
<keyword id="KW-0472">Membrane</keyword>
<keyword id="KW-0573">Peptidoglycan synthesis</keyword>
<keyword id="KW-1185">Reference proteome</keyword>
<keyword id="KW-0812">Transmembrane</keyword>
<keyword id="KW-1133">Transmembrane helix</keyword>
<organism>
    <name type="scientific">Treponema denticola (strain ATCC 35405 / DSM 14222 / CIP 103919 / JCM 8153 / KCTC 15104)</name>
    <dbReference type="NCBI Taxonomy" id="243275"/>
    <lineage>
        <taxon>Bacteria</taxon>
        <taxon>Pseudomonadati</taxon>
        <taxon>Spirochaetota</taxon>
        <taxon>Spirochaetia</taxon>
        <taxon>Spirochaetales</taxon>
        <taxon>Treponemataceae</taxon>
        <taxon>Treponema</taxon>
    </lineage>
</organism>
<evidence type="ECO:0000255" key="1">
    <source>
        <dbReference type="HAMAP-Rule" id="MF_01006"/>
    </source>
</evidence>
<feature type="chain" id="PRO_0000151231" description="Undecaprenyl-diphosphatase">
    <location>
        <begin position="1"/>
        <end position="269"/>
    </location>
</feature>
<feature type="transmembrane region" description="Helical" evidence="1">
    <location>
        <begin position="1"/>
        <end position="21"/>
    </location>
</feature>
<feature type="transmembrane region" description="Helical" evidence="1">
    <location>
        <begin position="39"/>
        <end position="59"/>
    </location>
</feature>
<feature type="transmembrane region" description="Helical" evidence="1">
    <location>
        <begin position="86"/>
        <end position="106"/>
    </location>
</feature>
<feature type="transmembrane region" description="Helical" evidence="1">
    <location>
        <begin position="112"/>
        <end position="132"/>
    </location>
</feature>
<feature type="transmembrane region" description="Helical" evidence="1">
    <location>
        <begin position="144"/>
        <end position="164"/>
    </location>
</feature>
<feature type="transmembrane region" description="Helical" evidence="1">
    <location>
        <begin position="184"/>
        <end position="204"/>
    </location>
</feature>
<feature type="transmembrane region" description="Helical" evidence="1">
    <location>
        <begin position="210"/>
        <end position="230"/>
    </location>
</feature>
<feature type="transmembrane region" description="Helical" evidence="1">
    <location>
        <begin position="249"/>
        <end position="269"/>
    </location>
</feature>
<proteinExistence type="inferred from homology"/>
<protein>
    <recommendedName>
        <fullName evidence="1">Undecaprenyl-diphosphatase</fullName>
        <ecNumber evidence="1">3.6.1.27</ecNumber>
    </recommendedName>
    <alternativeName>
        <fullName evidence="1">Bacitracin resistance protein</fullName>
    </alternativeName>
    <alternativeName>
        <fullName evidence="1">Undecaprenyl pyrophosphate phosphatase</fullName>
    </alternativeName>
</protein>